<keyword id="KW-1185">Reference proteome</keyword>
<keyword id="KW-0687">Ribonucleoprotein</keyword>
<keyword id="KW-0689">Ribosomal protein</keyword>
<keyword id="KW-0694">RNA-binding</keyword>
<keyword id="KW-0699">rRNA-binding</keyword>
<name>RL25_HALOH</name>
<comment type="function">
    <text evidence="1">This is one of the proteins that binds to the 5S RNA in the ribosome where it forms part of the central protuberance.</text>
</comment>
<comment type="subunit">
    <text evidence="1">Part of the 50S ribosomal subunit; part of the 5S rRNA/L5/L18/L25 subcomplex. Contacts the 5S rRNA. Binds to the 5S rRNA independently of L5 and L18.</text>
</comment>
<comment type="similarity">
    <text evidence="1">Belongs to the bacterial ribosomal protein bL25 family. CTC subfamily.</text>
</comment>
<evidence type="ECO:0000255" key="1">
    <source>
        <dbReference type="HAMAP-Rule" id="MF_01334"/>
    </source>
</evidence>
<evidence type="ECO:0000256" key="2">
    <source>
        <dbReference type="SAM" id="MobiDB-lite"/>
    </source>
</evidence>
<evidence type="ECO:0000305" key="3"/>
<feature type="chain" id="PRO_1000166173" description="Large ribosomal subunit protein bL25">
    <location>
        <begin position="1"/>
        <end position="218"/>
    </location>
</feature>
<feature type="region of interest" description="Disordered" evidence="2">
    <location>
        <begin position="186"/>
        <end position="218"/>
    </location>
</feature>
<accession>B8D015</accession>
<sequence>MERYNLKAEVRKDTGKGVARKLRRNGLIPGVIYGKTRKPQPLAVDAKDLNKVVGGNAILDMTLVDGDKEEKETAVVKDLQRDPVQGNILHVDFQHISMTDKLTVSVPVHIVGNARGVVAGGVLQQLAREIEVECLPTDIPDEIEVDITDLGLGDSLSVGDIEPPANTDFITPEDEVIVTIVAPSEAVEEEVPAEDEEIMPEPEVIGEEDEGDEEEPEE</sequence>
<organism>
    <name type="scientific">Halothermothrix orenii (strain H 168 / OCM 544 / DSM 9562)</name>
    <dbReference type="NCBI Taxonomy" id="373903"/>
    <lineage>
        <taxon>Bacteria</taxon>
        <taxon>Bacillati</taxon>
        <taxon>Bacillota</taxon>
        <taxon>Clostridia</taxon>
        <taxon>Halanaerobiales</taxon>
        <taxon>Halothermotrichaceae</taxon>
        <taxon>Halothermothrix</taxon>
    </lineage>
</organism>
<gene>
    <name evidence="1" type="primary">rplY</name>
    <name evidence="1" type="synonym">ctc</name>
    <name type="ordered locus">Hore_21220</name>
</gene>
<proteinExistence type="inferred from homology"/>
<protein>
    <recommendedName>
        <fullName evidence="1">Large ribosomal subunit protein bL25</fullName>
    </recommendedName>
    <alternativeName>
        <fullName evidence="3">50S ribosomal protein L25</fullName>
    </alternativeName>
    <alternativeName>
        <fullName evidence="1">General stress protein CTC</fullName>
    </alternativeName>
</protein>
<dbReference type="EMBL" id="CP001098">
    <property type="protein sequence ID" value="ACL70867.1"/>
    <property type="molecule type" value="Genomic_DNA"/>
</dbReference>
<dbReference type="RefSeq" id="WP_015923836.1">
    <property type="nucleotide sequence ID" value="NC_011899.1"/>
</dbReference>
<dbReference type="SMR" id="B8D015"/>
<dbReference type="STRING" id="373903.Hore_21220"/>
<dbReference type="KEGG" id="hor:Hore_21220"/>
<dbReference type="eggNOG" id="COG1825">
    <property type="taxonomic scope" value="Bacteria"/>
</dbReference>
<dbReference type="HOGENOM" id="CLU_075939_2_0_9"/>
<dbReference type="OrthoDB" id="9790002at2"/>
<dbReference type="Proteomes" id="UP000000719">
    <property type="component" value="Chromosome"/>
</dbReference>
<dbReference type="GO" id="GO:0022625">
    <property type="term" value="C:cytosolic large ribosomal subunit"/>
    <property type="evidence" value="ECO:0007669"/>
    <property type="project" value="TreeGrafter"/>
</dbReference>
<dbReference type="GO" id="GO:0008097">
    <property type="term" value="F:5S rRNA binding"/>
    <property type="evidence" value="ECO:0007669"/>
    <property type="project" value="InterPro"/>
</dbReference>
<dbReference type="GO" id="GO:0003735">
    <property type="term" value="F:structural constituent of ribosome"/>
    <property type="evidence" value="ECO:0007669"/>
    <property type="project" value="InterPro"/>
</dbReference>
<dbReference type="GO" id="GO:0006412">
    <property type="term" value="P:translation"/>
    <property type="evidence" value="ECO:0007669"/>
    <property type="project" value="UniProtKB-UniRule"/>
</dbReference>
<dbReference type="CDD" id="cd00495">
    <property type="entry name" value="Ribosomal_L25_TL5_CTC"/>
    <property type="match status" value="1"/>
</dbReference>
<dbReference type="Gene3D" id="2.170.120.20">
    <property type="entry name" value="Ribosomal protein L25, beta domain"/>
    <property type="match status" value="1"/>
</dbReference>
<dbReference type="Gene3D" id="2.40.240.10">
    <property type="entry name" value="Ribosomal Protein L25, Chain P"/>
    <property type="match status" value="1"/>
</dbReference>
<dbReference type="HAMAP" id="MF_01334">
    <property type="entry name" value="Ribosomal_bL25_CTC"/>
    <property type="match status" value="1"/>
</dbReference>
<dbReference type="InterPro" id="IPR020056">
    <property type="entry name" value="Rbsml_bL25/Gln-tRNA_synth_N"/>
</dbReference>
<dbReference type="InterPro" id="IPR011035">
    <property type="entry name" value="Ribosomal_bL25/Gln-tRNA_synth"/>
</dbReference>
<dbReference type="InterPro" id="IPR020057">
    <property type="entry name" value="Ribosomal_bL25_b-dom"/>
</dbReference>
<dbReference type="InterPro" id="IPR037121">
    <property type="entry name" value="Ribosomal_bL25_C"/>
</dbReference>
<dbReference type="InterPro" id="IPR001021">
    <property type="entry name" value="Ribosomal_bL25_long"/>
</dbReference>
<dbReference type="InterPro" id="IPR029751">
    <property type="entry name" value="Ribosomal_L25_dom"/>
</dbReference>
<dbReference type="InterPro" id="IPR020930">
    <property type="entry name" value="Ribosomal_uL5_bac-type"/>
</dbReference>
<dbReference type="NCBIfam" id="TIGR00731">
    <property type="entry name" value="bL25_bact_ctc"/>
    <property type="match status" value="1"/>
</dbReference>
<dbReference type="NCBIfam" id="NF004128">
    <property type="entry name" value="PRK05618.1-2"/>
    <property type="match status" value="1"/>
</dbReference>
<dbReference type="NCBIfam" id="NF004612">
    <property type="entry name" value="PRK05943.1"/>
    <property type="match status" value="1"/>
</dbReference>
<dbReference type="PANTHER" id="PTHR33284">
    <property type="entry name" value="RIBOSOMAL PROTEIN L25/GLN-TRNA SYNTHETASE, ANTI-CODON-BINDING DOMAIN-CONTAINING PROTEIN"/>
    <property type="match status" value="1"/>
</dbReference>
<dbReference type="PANTHER" id="PTHR33284:SF1">
    <property type="entry name" value="RIBOSOMAL PROTEIN L25_GLN-TRNA SYNTHETASE, ANTI-CODON-BINDING DOMAIN-CONTAINING PROTEIN"/>
    <property type="match status" value="1"/>
</dbReference>
<dbReference type="Pfam" id="PF01386">
    <property type="entry name" value="Ribosomal_L25p"/>
    <property type="match status" value="1"/>
</dbReference>
<dbReference type="Pfam" id="PF14693">
    <property type="entry name" value="Ribosomal_TL5_C"/>
    <property type="match status" value="1"/>
</dbReference>
<dbReference type="SUPFAM" id="SSF50715">
    <property type="entry name" value="Ribosomal protein L25-like"/>
    <property type="match status" value="1"/>
</dbReference>
<reference key="1">
    <citation type="journal article" date="2009" name="PLoS ONE">
        <title>Genome analysis of the anaerobic thermohalophilic bacterium Halothermothrix orenii.</title>
        <authorList>
            <person name="Mavromatis K."/>
            <person name="Ivanova N."/>
            <person name="Anderson I."/>
            <person name="Lykidis A."/>
            <person name="Hooper S.D."/>
            <person name="Sun H."/>
            <person name="Kunin V."/>
            <person name="Lapidus A."/>
            <person name="Hugenholtz P."/>
            <person name="Patel B."/>
            <person name="Kyrpides N.C."/>
        </authorList>
    </citation>
    <scope>NUCLEOTIDE SEQUENCE [LARGE SCALE GENOMIC DNA]</scope>
    <source>
        <strain>H 168 / OCM 544 / DSM 9562</strain>
    </source>
</reference>